<name>DNAG_METLZ</name>
<reference key="1">
    <citation type="journal article" date="2009" name="Stand. Genomic Sci.">
        <title>Complete genome sequence of Methanocorpusculum labreanum type strain Z.</title>
        <authorList>
            <person name="Anderson I.J."/>
            <person name="Sieprawska-Lupa M."/>
            <person name="Goltsman E."/>
            <person name="Lapidus A."/>
            <person name="Copeland A."/>
            <person name="Glavina Del Rio T."/>
            <person name="Tice H."/>
            <person name="Dalin E."/>
            <person name="Barry K."/>
            <person name="Pitluck S."/>
            <person name="Hauser L."/>
            <person name="Land M."/>
            <person name="Lucas S."/>
            <person name="Richardson P."/>
            <person name="Whitman W.B."/>
            <person name="Kyrpides N.C."/>
        </authorList>
    </citation>
    <scope>NUCLEOTIDE SEQUENCE [LARGE SCALE GENOMIC DNA]</scope>
    <source>
        <strain>ATCC 43576 / DSM 4855 / Z</strain>
    </source>
</reference>
<comment type="function">
    <text evidence="1">RNA polymerase that catalyzes the synthesis of short RNA molecules used as primers for DNA polymerase during DNA replication.</text>
</comment>
<comment type="catalytic activity">
    <reaction evidence="1">
        <text>ssDNA + n NTP = ssDNA/pppN(pN)n-1 hybrid + (n-1) diphosphate.</text>
        <dbReference type="EC" id="2.7.7.101"/>
    </reaction>
</comment>
<comment type="cofactor">
    <cofactor evidence="1">
        <name>Mg(2+)</name>
        <dbReference type="ChEBI" id="CHEBI:18420"/>
    </cofactor>
    <text evidence="1">Binds two Mg(2+) per subunit.</text>
</comment>
<comment type="subunit">
    <text evidence="1">Forms a ternary complex with MCM helicase and DNA.</text>
</comment>
<comment type="similarity">
    <text evidence="1">Belongs to the archaeal DnaG primase family.</text>
</comment>
<evidence type="ECO:0000255" key="1">
    <source>
        <dbReference type="HAMAP-Rule" id="MF_00007"/>
    </source>
</evidence>
<evidence type="ECO:0000256" key="2">
    <source>
        <dbReference type="SAM" id="MobiDB-lite"/>
    </source>
</evidence>
<gene>
    <name evidence="1" type="primary">dnaG</name>
    <name type="ordered locus">Mlab_0361</name>
</gene>
<feature type="chain" id="PRO_1000000558" description="DNA primase DnaG">
    <location>
        <begin position="1"/>
        <end position="434"/>
    </location>
</feature>
<feature type="domain" description="Toprim" evidence="1">
    <location>
        <begin position="171"/>
        <end position="250"/>
    </location>
</feature>
<feature type="region of interest" description="Disordered" evidence="2">
    <location>
        <begin position="290"/>
        <end position="319"/>
    </location>
</feature>
<feature type="compositionally biased region" description="Basic and acidic residues" evidence="2">
    <location>
        <begin position="292"/>
        <end position="303"/>
    </location>
</feature>
<feature type="binding site" evidence="1">
    <location>
        <position position="177"/>
    </location>
    <ligand>
        <name>Mg(2+)</name>
        <dbReference type="ChEBI" id="CHEBI:18420"/>
        <label>1</label>
        <note>catalytic</note>
    </ligand>
</feature>
<feature type="binding site" evidence="1">
    <location>
        <position position="219"/>
    </location>
    <ligand>
        <name>Mg(2+)</name>
        <dbReference type="ChEBI" id="CHEBI:18420"/>
        <label>1</label>
        <note>catalytic</note>
    </ligand>
</feature>
<feature type="binding site" evidence="1">
    <location>
        <position position="219"/>
    </location>
    <ligand>
        <name>Mg(2+)</name>
        <dbReference type="ChEBI" id="CHEBI:18420"/>
        <label>2</label>
    </ligand>
</feature>
<feature type="binding site" evidence="1">
    <location>
        <position position="221"/>
    </location>
    <ligand>
        <name>Mg(2+)</name>
        <dbReference type="ChEBI" id="CHEBI:18420"/>
        <label>2</label>
    </ligand>
</feature>
<dbReference type="EC" id="2.7.7.101" evidence="1"/>
<dbReference type="EMBL" id="CP000559">
    <property type="protein sequence ID" value="ABN06537.1"/>
    <property type="molecule type" value="Genomic_DNA"/>
</dbReference>
<dbReference type="RefSeq" id="WP_011832738.1">
    <property type="nucleotide sequence ID" value="NC_008942.1"/>
</dbReference>
<dbReference type="SMR" id="A2SQD1"/>
<dbReference type="STRING" id="410358.Mlab_0361"/>
<dbReference type="GeneID" id="4794931"/>
<dbReference type="KEGG" id="mla:Mlab_0361"/>
<dbReference type="eggNOG" id="arCOG04281">
    <property type="taxonomic scope" value="Archaea"/>
</dbReference>
<dbReference type="HOGENOM" id="CLU_034626_0_0_2"/>
<dbReference type="OrthoDB" id="8643at2157"/>
<dbReference type="Proteomes" id="UP000000365">
    <property type="component" value="Chromosome"/>
</dbReference>
<dbReference type="GO" id="GO:0005737">
    <property type="term" value="C:cytoplasm"/>
    <property type="evidence" value="ECO:0007669"/>
    <property type="project" value="TreeGrafter"/>
</dbReference>
<dbReference type="GO" id="GO:0000428">
    <property type="term" value="C:DNA-directed RNA polymerase complex"/>
    <property type="evidence" value="ECO:0007669"/>
    <property type="project" value="UniProtKB-KW"/>
</dbReference>
<dbReference type="GO" id="GO:0000178">
    <property type="term" value="C:exosome (RNase complex)"/>
    <property type="evidence" value="ECO:0007669"/>
    <property type="project" value="InterPro"/>
</dbReference>
<dbReference type="GO" id="GO:1990077">
    <property type="term" value="C:primosome complex"/>
    <property type="evidence" value="ECO:0007669"/>
    <property type="project" value="UniProtKB-KW"/>
</dbReference>
<dbReference type="GO" id="GO:0003899">
    <property type="term" value="F:DNA-directed RNA polymerase activity"/>
    <property type="evidence" value="ECO:0007669"/>
    <property type="project" value="InterPro"/>
</dbReference>
<dbReference type="GO" id="GO:0046872">
    <property type="term" value="F:metal ion binding"/>
    <property type="evidence" value="ECO:0007669"/>
    <property type="project" value="UniProtKB-KW"/>
</dbReference>
<dbReference type="GO" id="GO:0008143">
    <property type="term" value="F:poly(A) binding"/>
    <property type="evidence" value="ECO:0007669"/>
    <property type="project" value="InterPro"/>
</dbReference>
<dbReference type="GO" id="GO:0006269">
    <property type="term" value="P:DNA replication, synthesis of primer"/>
    <property type="evidence" value="ECO:0007669"/>
    <property type="project" value="UniProtKB-UniRule"/>
</dbReference>
<dbReference type="CDD" id="cd01029">
    <property type="entry name" value="TOPRIM_primases"/>
    <property type="match status" value="1"/>
</dbReference>
<dbReference type="Gene3D" id="3.40.1360.10">
    <property type="match status" value="1"/>
</dbReference>
<dbReference type="HAMAP" id="MF_00007">
    <property type="entry name" value="DNA_primase_DnaG_arc"/>
    <property type="match status" value="1"/>
</dbReference>
<dbReference type="InterPro" id="IPR050219">
    <property type="entry name" value="DnaG_primase"/>
</dbReference>
<dbReference type="InterPro" id="IPR020607">
    <property type="entry name" value="Primase_DnaG_arc"/>
</dbReference>
<dbReference type="InterPro" id="IPR034154">
    <property type="entry name" value="TOPRIM_DnaG/twinkle"/>
</dbReference>
<dbReference type="InterPro" id="IPR006171">
    <property type="entry name" value="TOPRIM_dom"/>
</dbReference>
<dbReference type="NCBIfam" id="NF003108">
    <property type="entry name" value="PRK04031.1-1"/>
    <property type="match status" value="1"/>
</dbReference>
<dbReference type="PANTHER" id="PTHR30313">
    <property type="entry name" value="DNA PRIMASE"/>
    <property type="match status" value="1"/>
</dbReference>
<dbReference type="PANTHER" id="PTHR30313:SF2">
    <property type="entry name" value="DNA PRIMASE"/>
    <property type="match status" value="1"/>
</dbReference>
<dbReference type="Pfam" id="PF13662">
    <property type="entry name" value="Toprim_4"/>
    <property type="match status" value="1"/>
</dbReference>
<dbReference type="SMART" id="SM00493">
    <property type="entry name" value="TOPRIM"/>
    <property type="match status" value="1"/>
</dbReference>
<dbReference type="SUPFAM" id="SSF56731">
    <property type="entry name" value="DNA primase core"/>
    <property type="match status" value="1"/>
</dbReference>
<dbReference type="PROSITE" id="PS50880">
    <property type="entry name" value="TOPRIM"/>
    <property type="match status" value="1"/>
</dbReference>
<sequence>MYSIDSIKYLIHIHIEAEGVVEKTDVVGAIFGQTEGLLGEELDLRDLQRSGRIGRIDVQIVSKHGKTAGECYIASSLDRAETAILAAALETIDRIGPCMAAIRIQNIEDLRAIKRRQIVERAKELLLESFDEVGISTYDILTEVREASRVEKITTIGPERLPAGPAVLESDAIIIVEGRADVLNLLKCGINNTVAVEGTKVPETVIDLSAKKNTTVFVDGDRGGDLILRELLQVADIDFVAFSPRRRSVEDMSRKEIVKSLRNKVPASVLKSHIEKDEPISDLVFEIEAGEEEHSSVSQKEEGNNTTPDVPADLPEEPPKSNIDEAIIPPITTSEQNLVKPENPHTIQEHTQYMKNTGRSRVLAEDAGVIGDYSLQELKAILPKLNDDVAGVIVDAAVDQKFIDQAFAKGLTYVAANAFEGIVRRPAGLRLIPF</sequence>
<protein>
    <recommendedName>
        <fullName evidence="1">DNA primase DnaG</fullName>
        <ecNumber evidence="1">2.7.7.101</ecNumber>
    </recommendedName>
</protein>
<keyword id="KW-0235">DNA replication</keyword>
<keyword id="KW-0240">DNA-directed RNA polymerase</keyword>
<keyword id="KW-0460">Magnesium</keyword>
<keyword id="KW-0479">Metal-binding</keyword>
<keyword id="KW-0548">Nucleotidyltransferase</keyword>
<keyword id="KW-0639">Primosome</keyword>
<keyword id="KW-1185">Reference proteome</keyword>
<keyword id="KW-0804">Transcription</keyword>
<keyword id="KW-0808">Transferase</keyword>
<proteinExistence type="inferred from homology"/>
<accession>A2SQD1</accession>
<organism>
    <name type="scientific">Methanocorpusculum labreanum (strain ATCC 43576 / DSM 4855 / Z)</name>
    <dbReference type="NCBI Taxonomy" id="410358"/>
    <lineage>
        <taxon>Archaea</taxon>
        <taxon>Methanobacteriati</taxon>
        <taxon>Methanobacteriota</taxon>
        <taxon>Stenosarchaea group</taxon>
        <taxon>Methanomicrobia</taxon>
        <taxon>Methanomicrobiales</taxon>
        <taxon>Methanocorpusculaceae</taxon>
        <taxon>Methanocorpusculum</taxon>
    </lineage>
</organism>